<dbReference type="EC" id="3.1.-.-" evidence="1"/>
<dbReference type="EMBL" id="CP001120">
    <property type="protein sequence ID" value="ACF67075.1"/>
    <property type="molecule type" value="Genomic_DNA"/>
</dbReference>
<dbReference type="RefSeq" id="WP_000419093.1">
    <property type="nucleotide sequence ID" value="NC_011083.1"/>
</dbReference>
<dbReference type="SMR" id="B4TBI0"/>
<dbReference type="KEGG" id="seh:SeHA_C2553"/>
<dbReference type="HOGENOM" id="CLU_031317_2_0_6"/>
<dbReference type="Proteomes" id="UP000001866">
    <property type="component" value="Chromosome"/>
</dbReference>
<dbReference type="GO" id="GO:0042781">
    <property type="term" value="F:3'-tRNA processing endoribonuclease activity"/>
    <property type="evidence" value="ECO:0007669"/>
    <property type="project" value="TreeGrafter"/>
</dbReference>
<dbReference type="GO" id="GO:0004527">
    <property type="term" value="F:exonuclease activity"/>
    <property type="evidence" value="ECO:0007669"/>
    <property type="project" value="UniProtKB-UniRule"/>
</dbReference>
<dbReference type="GO" id="GO:0008270">
    <property type="term" value="F:zinc ion binding"/>
    <property type="evidence" value="ECO:0007669"/>
    <property type="project" value="UniProtKB-UniRule"/>
</dbReference>
<dbReference type="CDD" id="cd07717">
    <property type="entry name" value="RNaseZ_ZiPD-like_MBL-fold"/>
    <property type="match status" value="1"/>
</dbReference>
<dbReference type="FunFam" id="3.60.15.10:FF:000002">
    <property type="entry name" value="Ribonuclease Z"/>
    <property type="match status" value="1"/>
</dbReference>
<dbReference type="Gene3D" id="3.60.15.10">
    <property type="entry name" value="Ribonuclease Z/Hydroxyacylglutathione hydrolase-like"/>
    <property type="match status" value="1"/>
</dbReference>
<dbReference type="HAMAP" id="MF_01818">
    <property type="entry name" value="RNase_Z_BN"/>
    <property type="match status" value="1"/>
</dbReference>
<dbReference type="InterPro" id="IPR001279">
    <property type="entry name" value="Metallo-B-lactamas"/>
</dbReference>
<dbReference type="InterPro" id="IPR036866">
    <property type="entry name" value="RibonucZ/Hydroxyglut_hydro"/>
</dbReference>
<dbReference type="InterPro" id="IPR013469">
    <property type="entry name" value="Rnase_BN"/>
</dbReference>
<dbReference type="InterPro" id="IPR013471">
    <property type="entry name" value="RNase_Z/BN"/>
</dbReference>
<dbReference type="NCBIfam" id="NF000800">
    <property type="entry name" value="PRK00055.1-1"/>
    <property type="match status" value="1"/>
</dbReference>
<dbReference type="NCBIfam" id="NF000801">
    <property type="entry name" value="PRK00055.1-3"/>
    <property type="match status" value="1"/>
</dbReference>
<dbReference type="NCBIfam" id="TIGR02651">
    <property type="entry name" value="RNase_Z"/>
    <property type="match status" value="1"/>
</dbReference>
<dbReference type="NCBIfam" id="TIGR02649">
    <property type="entry name" value="true_RNase_BN"/>
    <property type="match status" value="1"/>
</dbReference>
<dbReference type="PANTHER" id="PTHR46018">
    <property type="entry name" value="ZINC PHOSPHODIESTERASE ELAC PROTEIN 1"/>
    <property type="match status" value="1"/>
</dbReference>
<dbReference type="PANTHER" id="PTHR46018:SF2">
    <property type="entry name" value="ZINC PHOSPHODIESTERASE ELAC PROTEIN 1"/>
    <property type="match status" value="1"/>
</dbReference>
<dbReference type="Pfam" id="PF12706">
    <property type="entry name" value="Lactamase_B_2"/>
    <property type="match status" value="2"/>
</dbReference>
<dbReference type="SUPFAM" id="SSF56281">
    <property type="entry name" value="Metallo-hydrolase/oxidoreductase"/>
    <property type="match status" value="1"/>
</dbReference>
<feature type="chain" id="PRO_1000187984" description="Ribonuclease BN">
    <location>
        <begin position="1"/>
        <end position="305"/>
    </location>
</feature>
<feature type="active site" description="Proton acceptor" evidence="1">
    <location>
        <position position="68"/>
    </location>
</feature>
<feature type="binding site" evidence="1">
    <location>
        <position position="64"/>
    </location>
    <ligand>
        <name>Zn(2+)</name>
        <dbReference type="ChEBI" id="CHEBI:29105"/>
        <label>1</label>
        <note>catalytic</note>
    </ligand>
</feature>
<feature type="binding site" evidence="1">
    <location>
        <position position="66"/>
    </location>
    <ligand>
        <name>Zn(2+)</name>
        <dbReference type="ChEBI" id="CHEBI:29105"/>
        <label>1</label>
        <note>catalytic</note>
    </ligand>
</feature>
<feature type="binding site" evidence="1">
    <location>
        <position position="68"/>
    </location>
    <ligand>
        <name>Zn(2+)</name>
        <dbReference type="ChEBI" id="CHEBI:29105"/>
        <label>2</label>
        <note>catalytic</note>
    </ligand>
</feature>
<feature type="binding site" evidence="1">
    <location>
        <position position="69"/>
    </location>
    <ligand>
        <name>Zn(2+)</name>
        <dbReference type="ChEBI" id="CHEBI:29105"/>
        <label>2</label>
        <note>catalytic</note>
    </ligand>
</feature>
<feature type="binding site" evidence="1">
    <location>
        <position position="141"/>
    </location>
    <ligand>
        <name>Zn(2+)</name>
        <dbReference type="ChEBI" id="CHEBI:29105"/>
        <label>1</label>
        <note>catalytic</note>
    </ligand>
</feature>
<feature type="binding site" evidence="1">
    <location>
        <position position="212"/>
    </location>
    <ligand>
        <name>Zn(2+)</name>
        <dbReference type="ChEBI" id="CHEBI:29105"/>
        <label>1</label>
        <note>catalytic</note>
    </ligand>
</feature>
<feature type="binding site" evidence="1">
    <location>
        <position position="212"/>
    </location>
    <ligand>
        <name>Zn(2+)</name>
        <dbReference type="ChEBI" id="CHEBI:29105"/>
        <label>2</label>
        <note>catalytic</note>
    </ligand>
</feature>
<feature type="binding site" evidence="1">
    <location>
        <position position="270"/>
    </location>
    <ligand>
        <name>Zn(2+)</name>
        <dbReference type="ChEBI" id="CHEBI:29105"/>
        <label>2</label>
        <note>catalytic</note>
    </ligand>
</feature>
<comment type="function">
    <text evidence="1">Zinc phosphodiesterase, which has both exoribonuclease and endoribonuclease activities.</text>
</comment>
<comment type="cofactor">
    <cofactor evidence="1">
        <name>Zn(2+)</name>
        <dbReference type="ChEBI" id="CHEBI:29105"/>
    </cofactor>
    <text evidence="1">Binds 2 Zn(2+) ions.</text>
</comment>
<comment type="subunit">
    <text evidence="1">Homodimer.</text>
</comment>
<comment type="similarity">
    <text evidence="1">Belongs to the RNase Z family. RNase BN subfamily.</text>
</comment>
<sequence length="305" mass="32877">MELIFLGTSAGVPTRSRNVTAILLHLQHPTQPGVWLFDCGEGTQHQMLNTAFHPGKLERIFISHLHGDHLFGLPGLLCSRSMAGNPHPLTVYGPQGVREFIATTLRLSGSWTDFPLQIEEISAGDILDDGLRKVTAFRLEHPLECYGYRVVEHDKPGALNARALKAAGVTPGPLFQALKAGKTVTLADGRQINGADYLAPAVAGKSVAIFGDTAPCEAALALAQGVDVMVHETTLDASMEEKANARGHSSTRQTATLAREAAVGRLIMTHISSRYDDKGCQRLLAECRAIFPATELAYDFSVFPV</sequence>
<proteinExistence type="inferred from homology"/>
<accession>B4TBI0</accession>
<protein>
    <recommendedName>
        <fullName evidence="1">Ribonuclease BN</fullName>
        <shortName evidence="1">RNase BN</shortName>
        <ecNumber evidence="1">3.1.-.-</ecNumber>
    </recommendedName>
    <alternativeName>
        <fullName evidence="1">Ribonuclease Z homolog</fullName>
        <shortName evidence="1">RNase Z homolog</shortName>
    </alternativeName>
</protein>
<evidence type="ECO:0000255" key="1">
    <source>
        <dbReference type="HAMAP-Rule" id="MF_01818"/>
    </source>
</evidence>
<keyword id="KW-0255">Endonuclease</keyword>
<keyword id="KW-0269">Exonuclease</keyword>
<keyword id="KW-0378">Hydrolase</keyword>
<keyword id="KW-0479">Metal-binding</keyword>
<keyword id="KW-0540">Nuclease</keyword>
<keyword id="KW-0819">tRNA processing</keyword>
<keyword id="KW-0862">Zinc</keyword>
<gene>
    <name evidence="1" type="primary">rbn</name>
    <name type="synonym">rnz</name>
    <name type="ordered locus">SeHA_C2553</name>
</gene>
<organism>
    <name type="scientific">Salmonella heidelberg (strain SL476)</name>
    <dbReference type="NCBI Taxonomy" id="454169"/>
    <lineage>
        <taxon>Bacteria</taxon>
        <taxon>Pseudomonadati</taxon>
        <taxon>Pseudomonadota</taxon>
        <taxon>Gammaproteobacteria</taxon>
        <taxon>Enterobacterales</taxon>
        <taxon>Enterobacteriaceae</taxon>
        <taxon>Salmonella</taxon>
    </lineage>
</organism>
<name>RBN_SALHS</name>
<reference key="1">
    <citation type="journal article" date="2011" name="J. Bacteriol.">
        <title>Comparative genomics of 28 Salmonella enterica isolates: evidence for CRISPR-mediated adaptive sublineage evolution.</title>
        <authorList>
            <person name="Fricke W.F."/>
            <person name="Mammel M.K."/>
            <person name="McDermott P.F."/>
            <person name="Tartera C."/>
            <person name="White D.G."/>
            <person name="Leclerc J.E."/>
            <person name="Ravel J."/>
            <person name="Cebula T.A."/>
        </authorList>
    </citation>
    <scope>NUCLEOTIDE SEQUENCE [LARGE SCALE GENOMIC DNA]</scope>
    <source>
        <strain>SL476</strain>
    </source>
</reference>